<organism>
    <name type="scientific">Arabidopsis thaliana</name>
    <name type="common">Mouse-ear cress</name>
    <dbReference type="NCBI Taxonomy" id="3702"/>
    <lineage>
        <taxon>Eukaryota</taxon>
        <taxon>Viridiplantae</taxon>
        <taxon>Streptophyta</taxon>
        <taxon>Embryophyta</taxon>
        <taxon>Tracheophyta</taxon>
        <taxon>Spermatophyta</taxon>
        <taxon>Magnoliopsida</taxon>
        <taxon>eudicotyledons</taxon>
        <taxon>Gunneridae</taxon>
        <taxon>Pentapetalae</taxon>
        <taxon>rosids</taxon>
        <taxon>malvids</taxon>
        <taxon>Brassicales</taxon>
        <taxon>Brassicaceae</taxon>
        <taxon>Camelineae</taxon>
        <taxon>Arabidopsis</taxon>
    </lineage>
</organism>
<keyword id="KW-0539">Nucleus</keyword>
<keyword id="KW-1185">Reference proteome</keyword>
<keyword id="KW-0677">Repeat</keyword>
<keyword id="KW-0678">Repressor</keyword>
<keyword id="KW-0804">Transcription</keyword>
<keyword id="KW-0805">Transcription regulation</keyword>
<accession>Q9XIK6</accession>
<accession>F4I4C3</accession>
<sequence>MRDLLLGTTIPSYFSWLGLFPRFLVWFGFLKASFFCSSRNQSAGESGRRLKMKRAREDVHTDTQKRKPEVSSRGETNKLPRTIDALTYLKAVKDIFHDNKEKYESFLELMKEFKAQTIDTNGVIERIKVLFKGYRDLLLGFNTFLPKGYKITLLPEEEKPKIRVDFKDAIGFVTKIKTRFGDDEHAYKRFLDILNLYRKEKKSISEVYEEVTMLFKGHEDLLMEFVNFLPNCPESAPSTKNAVPRHKGTATTAMHSDKKRKQRCKLEDYSGHSDQREDGDENLVTCSADSPVGEGQPGYFRDYENREDTETDTADRTEKSAASGSQDIGNHKSTTKYVGTPINELDLSECTQCTPSYRLLPKDYAVEIPSYRNTLGKKTLNDHLVSVTSGSEDYSFSHMRKNQYEESLFRCEDDRYEMDMLLGSVSSAIKQVEILLEKMNNNTISVDSTICIEKHLSAMNLRCIERLYGDNGLDVMDLLKKNMHSALPVILTRLKQKQEEWARCHSDFQKVWAEVYAKNHHKSLDHRSFYFKQQDSKNLSTKCLVAEVKDISEKKHQEDLLQAIAVRVMPLFTPDLEFNYCDTQIHEDLYLLIKYYCEEICATEQSDKVMKLWITFLEPIFGILSRSQDNLALEDVSKLKNNRELQDACLAVKETASGSNRKHPISPKRLSKDNTKMQGSSSREDVSANIKVKTAQPDKLQDDAAMTNEVIQSSKFVSPKNDQIMEDEGNHMVNAASVEKHELEEGELSPTASREQSNFEVNGQNAFKPLQKVTDNVRSNKDKQSCDKKGAKNKTRAEDDKQENCHKLSENNKTASEMLVSGTKVSCHEENNRVMNCNGRGSVAGEMANGNQGEDGSFAFSERFLQTVKPVAKHLSWPLQASETCSQNDSQVFYGNDSYYVLFRLHQMLYERIQTAKKHSEKKWKAADNTTPDSYPRFMDALYNLLDGSIDNTKFEDECRAIFGAQSYVLFTLDKLVQKFVKHLHSVASDETDTKLLQLHAYENYRKPGKFFDLVYHENACALLHEANIYRIRYSSEGTRLSIQLMNSGNNQLEVMGVAMEPAFADYLQNKCLKSVNDEENHGLFLNRNKKKFTSLDESRGMPVAMERLNIINEMECRMACSSSKVKYVANTSDLLYRSKQGKPNSRVSEILKQRRISRFHIMLNCRLCALPL</sequence>
<gene>
    <name type="primary">SNL6</name>
    <name type="ordered locus">At1g10450</name>
    <name type="ORF">T10O24.5</name>
</gene>
<dbReference type="EMBL" id="AC007067">
    <property type="protein sequence ID" value="AAD39565.1"/>
    <property type="status" value="ALT_SEQ"/>
    <property type="molecule type" value="Genomic_DNA"/>
</dbReference>
<dbReference type="EMBL" id="CP002684">
    <property type="protein sequence ID" value="AEE28580.1"/>
    <property type="status" value="ALT_INIT"/>
    <property type="molecule type" value="Genomic_DNA"/>
</dbReference>
<dbReference type="EMBL" id="CP002684">
    <property type="protein sequence ID" value="ANM59404.1"/>
    <property type="molecule type" value="Genomic_DNA"/>
</dbReference>
<dbReference type="PIR" id="C86238">
    <property type="entry name" value="C86238"/>
</dbReference>
<dbReference type="RefSeq" id="NP_001321764.1">
    <property type="nucleotide sequence ID" value="NM_001331906.1"/>
</dbReference>
<dbReference type="RefSeq" id="NP_001321765.1">
    <property type="nucleotide sequence ID" value="NM_001331907.1"/>
</dbReference>
<dbReference type="RefSeq" id="NP_172515.2">
    <property type="nucleotide sequence ID" value="NM_100919.5"/>
</dbReference>
<dbReference type="SMR" id="Q9XIK6"/>
<dbReference type="FunCoup" id="Q9XIK6">
    <property type="interactions" value="3807"/>
</dbReference>
<dbReference type="IntAct" id="Q9XIK6">
    <property type="interactions" value="1"/>
</dbReference>
<dbReference type="STRING" id="3702.Q9XIK6"/>
<dbReference type="iPTMnet" id="Q9XIK6"/>
<dbReference type="PaxDb" id="3702-AT1G10450.1"/>
<dbReference type="ProteomicsDB" id="234533"/>
<dbReference type="EnsemblPlants" id="AT1G10450.3">
    <property type="protein sequence ID" value="AT1G10450.3"/>
    <property type="gene ID" value="AT1G10450"/>
</dbReference>
<dbReference type="GeneID" id="837584"/>
<dbReference type="Gramene" id="AT1G10450.3">
    <property type="protein sequence ID" value="AT1G10450.3"/>
    <property type="gene ID" value="AT1G10450"/>
</dbReference>
<dbReference type="KEGG" id="ath:AT1G10450"/>
<dbReference type="Araport" id="AT1G10450"/>
<dbReference type="TAIR" id="AT1G10450">
    <property type="gene designation" value="SNL6"/>
</dbReference>
<dbReference type="eggNOG" id="KOG4204">
    <property type="taxonomic scope" value="Eukaryota"/>
</dbReference>
<dbReference type="HOGENOM" id="CLU_007140_1_0_1"/>
<dbReference type="InParanoid" id="Q9XIK6"/>
<dbReference type="PhylomeDB" id="Q9XIK6"/>
<dbReference type="PRO" id="PR:Q9XIK6"/>
<dbReference type="Proteomes" id="UP000006548">
    <property type="component" value="Chromosome 1"/>
</dbReference>
<dbReference type="ExpressionAtlas" id="Q9XIK6">
    <property type="expression patterns" value="baseline and differential"/>
</dbReference>
<dbReference type="GO" id="GO:0005634">
    <property type="term" value="C:nucleus"/>
    <property type="evidence" value="ECO:0007669"/>
    <property type="project" value="UniProtKB-SubCell"/>
</dbReference>
<dbReference type="GO" id="GO:0003714">
    <property type="term" value="F:transcription corepressor activity"/>
    <property type="evidence" value="ECO:0007669"/>
    <property type="project" value="InterPro"/>
</dbReference>
<dbReference type="FunFam" id="1.20.1160.11:FF:000001">
    <property type="entry name" value="Paired amphipathic helix protein Sin3"/>
    <property type="match status" value="1"/>
</dbReference>
<dbReference type="FunFam" id="1.20.1160.11:FF:000003">
    <property type="entry name" value="Paired amphipathic helix SIN3-like protein"/>
    <property type="match status" value="1"/>
</dbReference>
<dbReference type="Gene3D" id="1.20.1160.11">
    <property type="entry name" value="Paired amphipathic helix"/>
    <property type="match status" value="2"/>
</dbReference>
<dbReference type="InterPro" id="IPR013194">
    <property type="entry name" value="HDAC_interact_dom"/>
</dbReference>
<dbReference type="InterPro" id="IPR003822">
    <property type="entry name" value="PAH"/>
</dbReference>
<dbReference type="InterPro" id="IPR036600">
    <property type="entry name" value="PAH_sf"/>
</dbReference>
<dbReference type="InterPro" id="IPR039774">
    <property type="entry name" value="Sin3-like"/>
</dbReference>
<dbReference type="InterPro" id="IPR031693">
    <property type="entry name" value="Sin3_C"/>
</dbReference>
<dbReference type="PANTHER" id="PTHR12346:SF24">
    <property type="entry name" value="PAIRED AMPHIPATHIC HELIX PROTEIN SIN3-LIKE 6"/>
    <property type="match status" value="1"/>
</dbReference>
<dbReference type="PANTHER" id="PTHR12346">
    <property type="entry name" value="SIN3B-RELATED"/>
    <property type="match status" value="1"/>
</dbReference>
<dbReference type="Pfam" id="PF02671">
    <property type="entry name" value="PAH"/>
    <property type="match status" value="2"/>
</dbReference>
<dbReference type="Pfam" id="PF08295">
    <property type="entry name" value="Sin3_corepress"/>
    <property type="match status" value="1"/>
</dbReference>
<dbReference type="Pfam" id="PF16879">
    <property type="entry name" value="Sin3a_C"/>
    <property type="match status" value="1"/>
</dbReference>
<dbReference type="SMART" id="SM00761">
    <property type="entry name" value="HDAC_interact"/>
    <property type="match status" value="1"/>
</dbReference>
<dbReference type="SUPFAM" id="SSF47762">
    <property type="entry name" value="PAH2 domain"/>
    <property type="match status" value="2"/>
</dbReference>
<dbReference type="PROSITE" id="PS51477">
    <property type="entry name" value="PAH"/>
    <property type="match status" value="2"/>
</dbReference>
<name>SNL6_ARATH</name>
<proteinExistence type="inferred from homology"/>
<protein>
    <recommendedName>
        <fullName>Paired amphipathic helix protein Sin3-like 6</fullName>
    </recommendedName>
</protein>
<comment type="function">
    <text evidence="1">Acts as a transcriptional repressor. Plays roles in regulating gene expression and genome stability (By similarity).</text>
</comment>
<comment type="subcellular location">
    <subcellularLocation>
        <location evidence="2">Nucleus</location>
    </subcellularLocation>
</comment>
<comment type="sequence caution" evidence="4">
    <conflict type="erroneous gene model prediction">
        <sequence resource="EMBL-CDS" id="AAD39565"/>
    </conflict>
</comment>
<comment type="sequence caution" evidence="4">
    <conflict type="erroneous initiation">
        <sequence resource="EMBL-CDS" id="AEE28580"/>
    </conflict>
    <text>Truncated N-terminus.</text>
</comment>
<feature type="chain" id="PRO_0000394044" description="Paired amphipathic helix protein Sin3-like 6">
    <location>
        <begin position="1"/>
        <end position="1173"/>
    </location>
</feature>
<feature type="domain" description="PAH 1" evidence="2">
    <location>
        <begin position="79"/>
        <end position="148"/>
    </location>
</feature>
<feature type="domain" description="PAH 2" evidence="2">
    <location>
        <begin position="162"/>
        <end position="232"/>
    </location>
</feature>
<feature type="region of interest" description="Disordered" evidence="3">
    <location>
        <begin position="40"/>
        <end position="75"/>
    </location>
</feature>
<feature type="region of interest" description="Disordered" evidence="3">
    <location>
        <begin position="236"/>
        <end position="337"/>
    </location>
</feature>
<feature type="region of interest" description="Disordered" evidence="3">
    <location>
        <begin position="655"/>
        <end position="697"/>
    </location>
</feature>
<feature type="region of interest" description="Disordered" evidence="3">
    <location>
        <begin position="740"/>
        <end position="813"/>
    </location>
</feature>
<feature type="compositionally biased region" description="Basic and acidic residues" evidence="3">
    <location>
        <begin position="55"/>
        <end position="75"/>
    </location>
</feature>
<feature type="compositionally biased region" description="Basic and acidic residues" evidence="3">
    <location>
        <begin position="264"/>
        <end position="276"/>
    </location>
</feature>
<feature type="compositionally biased region" description="Basic and acidic residues" evidence="3">
    <location>
        <begin position="301"/>
        <end position="319"/>
    </location>
</feature>
<feature type="compositionally biased region" description="Polar residues" evidence="3">
    <location>
        <begin position="320"/>
        <end position="337"/>
    </location>
</feature>
<feature type="compositionally biased region" description="Polar residues" evidence="3">
    <location>
        <begin position="750"/>
        <end position="765"/>
    </location>
</feature>
<feature type="compositionally biased region" description="Basic and acidic residues" evidence="3">
    <location>
        <begin position="778"/>
        <end position="810"/>
    </location>
</feature>
<reference key="1">
    <citation type="journal article" date="2000" name="Nature">
        <title>Sequence and analysis of chromosome 1 of the plant Arabidopsis thaliana.</title>
        <authorList>
            <person name="Theologis A."/>
            <person name="Ecker J.R."/>
            <person name="Palm C.J."/>
            <person name="Federspiel N.A."/>
            <person name="Kaul S."/>
            <person name="White O."/>
            <person name="Alonso J."/>
            <person name="Altafi H."/>
            <person name="Araujo R."/>
            <person name="Bowman C.L."/>
            <person name="Brooks S.Y."/>
            <person name="Buehler E."/>
            <person name="Chan A."/>
            <person name="Chao Q."/>
            <person name="Chen H."/>
            <person name="Cheuk R.F."/>
            <person name="Chin C.W."/>
            <person name="Chung M.K."/>
            <person name="Conn L."/>
            <person name="Conway A.B."/>
            <person name="Conway A.R."/>
            <person name="Creasy T.H."/>
            <person name="Dewar K."/>
            <person name="Dunn P."/>
            <person name="Etgu P."/>
            <person name="Feldblyum T.V."/>
            <person name="Feng J.-D."/>
            <person name="Fong B."/>
            <person name="Fujii C.Y."/>
            <person name="Gill J.E."/>
            <person name="Goldsmith A.D."/>
            <person name="Haas B."/>
            <person name="Hansen N.F."/>
            <person name="Hughes B."/>
            <person name="Huizar L."/>
            <person name="Hunter J.L."/>
            <person name="Jenkins J."/>
            <person name="Johnson-Hopson C."/>
            <person name="Khan S."/>
            <person name="Khaykin E."/>
            <person name="Kim C.J."/>
            <person name="Koo H.L."/>
            <person name="Kremenetskaia I."/>
            <person name="Kurtz D.B."/>
            <person name="Kwan A."/>
            <person name="Lam B."/>
            <person name="Langin-Hooper S."/>
            <person name="Lee A."/>
            <person name="Lee J.M."/>
            <person name="Lenz C.A."/>
            <person name="Li J.H."/>
            <person name="Li Y.-P."/>
            <person name="Lin X."/>
            <person name="Liu S.X."/>
            <person name="Liu Z.A."/>
            <person name="Luros J.S."/>
            <person name="Maiti R."/>
            <person name="Marziali A."/>
            <person name="Militscher J."/>
            <person name="Miranda M."/>
            <person name="Nguyen M."/>
            <person name="Nierman W.C."/>
            <person name="Osborne B.I."/>
            <person name="Pai G."/>
            <person name="Peterson J."/>
            <person name="Pham P.K."/>
            <person name="Rizzo M."/>
            <person name="Rooney T."/>
            <person name="Rowley D."/>
            <person name="Sakano H."/>
            <person name="Salzberg S.L."/>
            <person name="Schwartz J.R."/>
            <person name="Shinn P."/>
            <person name="Southwick A.M."/>
            <person name="Sun H."/>
            <person name="Tallon L.J."/>
            <person name="Tambunga G."/>
            <person name="Toriumi M.J."/>
            <person name="Town C.D."/>
            <person name="Utterback T."/>
            <person name="Van Aken S."/>
            <person name="Vaysberg M."/>
            <person name="Vysotskaia V.S."/>
            <person name="Walker M."/>
            <person name="Wu D."/>
            <person name="Yu G."/>
            <person name="Fraser C.M."/>
            <person name="Venter J.C."/>
            <person name="Davis R.W."/>
        </authorList>
    </citation>
    <scope>NUCLEOTIDE SEQUENCE [LARGE SCALE GENOMIC DNA]</scope>
    <source>
        <strain>cv. Columbia</strain>
    </source>
</reference>
<reference key="2">
    <citation type="journal article" date="2017" name="Plant J.">
        <title>Araport11: a complete reannotation of the Arabidopsis thaliana reference genome.</title>
        <authorList>
            <person name="Cheng C.Y."/>
            <person name="Krishnakumar V."/>
            <person name="Chan A.P."/>
            <person name="Thibaud-Nissen F."/>
            <person name="Schobel S."/>
            <person name="Town C.D."/>
        </authorList>
    </citation>
    <scope>GENOME REANNOTATION</scope>
    <source>
        <strain>cv. Columbia</strain>
    </source>
</reference>
<reference key="3">
    <citation type="journal article" date="2010" name="J. Mol. Biol.">
        <title>PAH-domain-specific interactions of the Arabidopsis transcription coregulator SIN3-LIKE1 (SNL1) with telomere-binding protein 1 and ALWAYS EARLY2 Myb-DNA binding factors.</title>
        <authorList>
            <person name="Bowen A.J."/>
            <person name="Gonzalez D."/>
            <person name="Mullins J.G."/>
            <person name="Bhatt A.M."/>
            <person name="Martinez A."/>
            <person name="Conlan R.S."/>
        </authorList>
    </citation>
    <scope>GENE FAMILY</scope>
    <scope>NOMENCLATURE</scope>
</reference>
<evidence type="ECO:0000250" key="1"/>
<evidence type="ECO:0000255" key="2">
    <source>
        <dbReference type="PROSITE-ProRule" id="PRU00810"/>
    </source>
</evidence>
<evidence type="ECO:0000256" key="3">
    <source>
        <dbReference type="SAM" id="MobiDB-lite"/>
    </source>
</evidence>
<evidence type="ECO:0000305" key="4"/>